<sequence>MANVWGVRLADSLSSPTIETRTRHYTLRDFCSDLDAVAGKEPWRPLRNQRTNDIVAVQLFRPLQGLVLDTQFYGFPGIFSEWEQFIKEKLRVLKYEVLRIYPISNYNHERVNVFVANALVGAFLSNQAFYDLLPLLVINDTMINDLLGTGAALSQFFQSHGEVLEVAAGRKYLQMKNYSNDDDDPPLFAKDLSDYAKAFYSDTFETLDRFFWTHDSSAGVLVHYDKPTNGNHYILGTLTQMVSAPPHIINATDALLLESCLEQFAANVRARPAQPVARLDQCYHLRWGAQYVGEDSLTYRLGVLSLLATNGYQLARPIPKQLTNRWLSSFVSQVMSDGVNETPLWPQERYVQIAYDSPSVVDGATHYGYVRRNQLRLGMRVSALQSLSDTPAPIQWLPQYTIEQAAVDEGDLMVSRLTQLPLRPDYGSIWVGDALSYYVDYNRSHRVVLSSELPQLPDTYFDGDEQYGRSLFSLARKIGDRSLIKDTAVLKHAYQAIDPNTGKEYLRAGQSVAYFGASAGHSGADQPLVIEPWTQGKISGVPPPSSVRQFGYDVAKGAIVDLARPFPSGDYQFVYSDVDQVVDGHDDLSISSGLVESLLDSCMHATSPGGSFVMKINFPTRTVWHYIEQKILPNITSYMLIKPFVTNNVELFFVAFGVHQQSALTWTSGVYFFLVDHFYRYETLSTISRQLPSFGYVDDGSSVTGIEMISLENPGFSNMTQAARVGISGLCANVGNARKLISIHESHGARVLTITSRRSPASARRKARLRYLPLVDPRSLEVQARTILPSNPVLFDNVNGASPHVCLTMMYNFEVSSAVYDGDVVLDLGTGPEAKILELIPPTSPVTCVDIRPTAQPSGCWNVRTTFLELDYLSDGWITGIRGDIVTCMLSLGAAAAGKSMTFDAAFQQLVKVLTKSTANVLLIQVNCPTDVIRTIKGYLEIDQTNKRYRFPKFGRDEPYSDMDSLERICRAAWPNCSITWVPLSYDLRWTKLALLESTTLSSASVRIAELMYKYMPVMRIDIHGLPMEKQGNFIVGQNCSLTIPGFNAQDVFNCYFNSALAFSTEDVNSAMIPQVTAQFDANKGEWSLDMVFSDAGIYTMQALVGSNANPVSLGSFVVDSPDVDITDAWPAQLDFTIAGTDVDITVNPYYRLMAFVRIDGQWQIANPDKFQFFSSSTGTLVMNVKLDIADRYLLYYIRDVQSRDVGFYIQHPLQLLNTITLPTNEDLFLSAPDMREWAVKESGNTICILNSQGFVPPQDWDVLTDTISWSPSLPTYVVPPGDYTLTPL</sequence>
<dbReference type="EC" id="2.7.7.50"/>
<dbReference type="EC" id="2.1.1.56"/>
<dbReference type="EMBL" id="AF378003">
    <property type="protein sequence ID" value="AAK57507.1"/>
    <property type="molecule type" value="mRNA"/>
</dbReference>
<dbReference type="SMR" id="Q91RA6"/>
<dbReference type="Proteomes" id="UP000007253">
    <property type="component" value="Genome"/>
</dbReference>
<dbReference type="GO" id="GO:0039624">
    <property type="term" value="C:viral outer capsid"/>
    <property type="evidence" value="ECO:0007669"/>
    <property type="project" value="UniProtKB-KW"/>
</dbReference>
<dbReference type="GO" id="GO:0005524">
    <property type="term" value="F:ATP binding"/>
    <property type="evidence" value="ECO:0007669"/>
    <property type="project" value="UniProtKB-KW"/>
</dbReference>
<dbReference type="GO" id="GO:0005525">
    <property type="term" value="F:GTP binding"/>
    <property type="evidence" value="ECO:0007669"/>
    <property type="project" value="UniProtKB-KW"/>
</dbReference>
<dbReference type="GO" id="GO:0004482">
    <property type="term" value="F:mRNA 5'-cap (guanine-N7-)-methyltransferase activity"/>
    <property type="evidence" value="ECO:0007669"/>
    <property type="project" value="UniProtKB-EC"/>
</dbReference>
<dbReference type="GO" id="GO:0004484">
    <property type="term" value="F:mRNA guanylyltransferase activity"/>
    <property type="evidence" value="ECO:0007669"/>
    <property type="project" value="UniProtKB-EC"/>
</dbReference>
<dbReference type="FunFam" id="3.40.50.10760:FF:000001">
    <property type="entry name" value="Outer capsid protein lambda-2"/>
    <property type="match status" value="1"/>
</dbReference>
<dbReference type="Gene3D" id="2.60.40.10">
    <property type="entry name" value="Immunoglobulins"/>
    <property type="match status" value="1"/>
</dbReference>
<dbReference type="Gene3D" id="3.55.60.10">
    <property type="entry name" value="Reovirus components"/>
    <property type="match status" value="1"/>
</dbReference>
<dbReference type="Gene3D" id="3.90.1810.10">
    <property type="entry name" value="Reovirus components"/>
    <property type="match status" value="1"/>
</dbReference>
<dbReference type="Gene3D" id="3.40.50.10760">
    <property type="entry name" value="Reovirus core"/>
    <property type="match status" value="1"/>
</dbReference>
<dbReference type="Gene3D" id="3.40.50.150">
    <property type="entry name" value="Vaccinia Virus protein VP39"/>
    <property type="match status" value="1"/>
</dbReference>
<dbReference type="InterPro" id="IPR013783">
    <property type="entry name" value="Ig-like_fold"/>
</dbReference>
<dbReference type="InterPro" id="IPR010311">
    <property type="entry name" value="Reovirus_L2"/>
</dbReference>
<dbReference type="InterPro" id="IPR048604">
    <property type="entry name" value="Reovirus_L2_4th"/>
</dbReference>
<dbReference type="InterPro" id="IPR048603">
    <property type="entry name" value="Reovirus_L2_6th"/>
</dbReference>
<dbReference type="InterPro" id="IPR048602">
    <property type="entry name" value="Reovirus_L2_7th"/>
</dbReference>
<dbReference type="InterPro" id="IPR048294">
    <property type="entry name" value="Reovirus_L2_8th"/>
</dbReference>
<dbReference type="InterPro" id="IPR048601">
    <property type="entry name" value="Reovirus_L2_GTase"/>
</dbReference>
<dbReference type="InterPro" id="IPR048598">
    <property type="entry name" value="Reovirus_L2_MT1"/>
</dbReference>
<dbReference type="InterPro" id="IPR048597">
    <property type="entry name" value="Reovirus_L2_MT2"/>
</dbReference>
<dbReference type="InterPro" id="IPR048596">
    <property type="entry name" value="Reovirus_L2_N"/>
</dbReference>
<dbReference type="InterPro" id="IPR029063">
    <property type="entry name" value="SAM-dependent_MTases_sf"/>
</dbReference>
<dbReference type="Pfam" id="PF21062">
    <property type="entry name" value="Reovirus_L2_4th"/>
    <property type="match status" value="1"/>
</dbReference>
<dbReference type="Pfam" id="PF21060">
    <property type="entry name" value="Reovirus_L2_6th"/>
    <property type="match status" value="1"/>
</dbReference>
<dbReference type="Pfam" id="PF21061">
    <property type="entry name" value="Reovirus_L2_7th"/>
    <property type="match status" value="1"/>
</dbReference>
<dbReference type="Pfam" id="PF06016">
    <property type="entry name" value="Reovirus_L2_8th"/>
    <property type="match status" value="1"/>
</dbReference>
<dbReference type="Pfam" id="PF21063">
    <property type="entry name" value="Reovirus_L2_GTase"/>
    <property type="match status" value="1"/>
</dbReference>
<dbReference type="Pfam" id="PF21065">
    <property type="entry name" value="Reovirus_L2_MT1"/>
    <property type="match status" value="1"/>
</dbReference>
<dbReference type="Pfam" id="PF21066">
    <property type="entry name" value="Reovirus_L2_MT2"/>
    <property type="match status" value="1"/>
</dbReference>
<dbReference type="Pfam" id="PF21064">
    <property type="entry name" value="Reovirus_L2_N"/>
    <property type="match status" value="1"/>
</dbReference>
<dbReference type="PIRSF" id="PIRSF000845">
    <property type="entry name" value="Reovirus_L2"/>
    <property type="match status" value="1"/>
</dbReference>
<proteinExistence type="evidence at protein level"/>
<reference key="1">
    <citation type="journal article" date="2001" name="Virology">
        <title>Mammalian reovirus L2 gene and lambda2 core spike protein sequences and whole-genome comparisons of reoviruses type 1 Lang, type 2 Jones, and type 3 Dearing.</title>
        <authorList>
            <person name="Breun L.A."/>
            <person name="Broering T.J."/>
            <person name="McCutcheon A.M."/>
            <person name="Harrison S.J."/>
            <person name="Luongo C.L."/>
            <person name="Nibert M.L."/>
        </authorList>
    </citation>
    <scope>NUCLEOTIDE SEQUENCE [MRNA]</scope>
</reference>
<reference key="2">
    <citation type="journal article" date="2004" name="J. Virol.">
        <title>Reovirus nonstructural protein mu NS recruits viral core surface proteins and entering core particles to factory-like inclusions.</title>
        <authorList>
            <person name="Broering T.J."/>
            <person name="Kim J."/>
            <person name="Miller C.L."/>
            <person name="Piggott C.D."/>
            <person name="Dinoso J.B."/>
            <person name="Nibert M.L."/>
            <person name="Parker J.S.L."/>
        </authorList>
    </citation>
    <scope>INTERACTION WITH PROTEIN MU-NS</scope>
</reference>
<evidence type="ECO:0000250" key="1"/>
<evidence type="ECO:0000255" key="2"/>
<evidence type="ECO:0000269" key="3">
    <source>
    </source>
</evidence>
<evidence type="ECO:0000305" key="4"/>
<gene>
    <name type="primary">L2</name>
</gene>
<keyword id="KW-0067">ATP-binding</keyword>
<keyword id="KW-0167">Capsid protein</keyword>
<keyword id="KW-0342">GTP-binding</keyword>
<keyword id="KW-0489">Methyltransferase</keyword>
<keyword id="KW-0506">mRNA capping</keyword>
<keyword id="KW-0507">mRNA processing</keyword>
<keyword id="KW-0511">Multifunctional enzyme</keyword>
<keyword id="KW-0547">Nucleotide-binding</keyword>
<keyword id="KW-0548">Nucleotidyltransferase</keyword>
<keyword id="KW-1152">Outer capsid protein</keyword>
<keyword id="KW-1185">Reference proteome</keyword>
<keyword id="KW-0949">S-adenosyl-L-methionine</keyword>
<keyword id="KW-0808">Transferase</keyword>
<keyword id="KW-0946">Virion</keyword>
<accession>Q91RA6</accession>
<protein>
    <recommendedName>
        <fullName>Outer capsid protein lambda-2</fullName>
        <shortName>Lambda2</shortName>
    </recommendedName>
    <alternativeName>
        <fullName>Lambda2(Cap)</fullName>
    </alternativeName>
    <domain>
        <recommendedName>
            <fullName>mRNA guanylyltransferase</fullName>
            <ecNumber>2.7.7.50</ecNumber>
        </recommendedName>
    </domain>
    <domain>
        <recommendedName>
            <fullName>mRNA (guanine-N(7))-methyltransferase</fullName>
            <ecNumber>2.1.1.56</ecNumber>
        </recommendedName>
    </domain>
</protein>
<name>LMBD2_REOVL</name>
<feature type="chain" id="PRO_0000345000" description="Outer capsid protein lambda-2">
    <location>
        <begin position="1"/>
        <end position="1289"/>
    </location>
</feature>
<feature type="binding site" evidence="2">
    <location>
        <begin position="893"/>
        <end position="900"/>
    </location>
    <ligand>
        <name>ATP</name>
        <dbReference type="ChEBI" id="CHEBI:30616"/>
    </ligand>
</feature>
<feature type="site" description="Involved in formation of the phosphoamide bond" evidence="1">
    <location>
        <position position="190"/>
    </location>
</feature>
<organism>
    <name type="scientific">Reovirus type 1 (strain Lang)</name>
    <name type="common">T1L</name>
    <name type="synonym">Mammalian orthoreovirus 1</name>
    <dbReference type="NCBI Taxonomy" id="10884"/>
    <lineage>
        <taxon>Viruses</taxon>
        <taxon>Riboviria</taxon>
        <taxon>Orthornavirae</taxon>
        <taxon>Duplornaviricota</taxon>
        <taxon>Resentoviricetes</taxon>
        <taxon>Reovirales</taxon>
        <taxon>Spinareoviridae</taxon>
        <taxon>Orthoreovirus</taxon>
        <taxon>Mammalian orthoreovirus</taxon>
    </lineage>
</organism>
<comment type="function">
    <text evidence="1">Outer capsid protein involved in mRNA capping. Catalyzes the last 3 enzymatic activities for formation of the 5' cap structure on the viral plus-strand transcripts, namely the RNA guanylyltransferase, RNA-7N- and RNA-2'O-methyltransferase activities (By similarity).</text>
</comment>
<comment type="catalytic activity">
    <reaction>
        <text>a 5'-end diphospho-ribonucleoside in mRNA + GTP + H(+) = a 5'-end (5'-triphosphoguanosine)-ribonucleoside in mRNA + diphosphate</text>
        <dbReference type="Rhea" id="RHEA:67012"/>
        <dbReference type="Rhea" id="RHEA-COMP:17165"/>
        <dbReference type="Rhea" id="RHEA-COMP:17166"/>
        <dbReference type="ChEBI" id="CHEBI:15378"/>
        <dbReference type="ChEBI" id="CHEBI:33019"/>
        <dbReference type="ChEBI" id="CHEBI:37565"/>
        <dbReference type="ChEBI" id="CHEBI:167616"/>
        <dbReference type="ChEBI" id="CHEBI:167617"/>
        <dbReference type="EC" id="2.7.7.50"/>
    </reaction>
</comment>
<comment type="catalytic activity">
    <reaction>
        <text>a 5'-end (5'-triphosphoguanosine)-ribonucleoside in mRNA + S-adenosyl-L-methionine = a 5'-end (N(7)-methyl 5'-triphosphoguanosine)-ribonucleoside in mRNA + S-adenosyl-L-homocysteine</text>
        <dbReference type="Rhea" id="RHEA:67008"/>
        <dbReference type="Rhea" id="RHEA-COMP:17166"/>
        <dbReference type="Rhea" id="RHEA-COMP:17167"/>
        <dbReference type="ChEBI" id="CHEBI:57856"/>
        <dbReference type="ChEBI" id="CHEBI:59789"/>
        <dbReference type="ChEBI" id="CHEBI:156461"/>
        <dbReference type="ChEBI" id="CHEBI:167617"/>
        <dbReference type="EC" id="2.1.1.56"/>
    </reaction>
</comment>
<comment type="subunit">
    <text evidence="3">Interacts with protein mu-NS; in viral inclusions.</text>
</comment>
<comment type="subcellular location">
    <subcellularLocation>
        <location evidence="4">Virion</location>
    </subcellularLocation>
</comment>
<comment type="similarity">
    <text evidence="4">Belongs to the orthoreovirus lambda-2 protein family.</text>
</comment>
<organismHost>
    <name type="scientific">Mammalia</name>
    <dbReference type="NCBI Taxonomy" id="40674"/>
</organismHost>